<reference key="1">
    <citation type="journal article" date="2009" name="PLoS Genet.">
        <title>Organised genome dynamics in the Escherichia coli species results in highly diverse adaptive paths.</title>
        <authorList>
            <person name="Touchon M."/>
            <person name="Hoede C."/>
            <person name="Tenaillon O."/>
            <person name="Barbe V."/>
            <person name="Baeriswyl S."/>
            <person name="Bidet P."/>
            <person name="Bingen E."/>
            <person name="Bonacorsi S."/>
            <person name="Bouchier C."/>
            <person name="Bouvet O."/>
            <person name="Calteau A."/>
            <person name="Chiapello H."/>
            <person name="Clermont O."/>
            <person name="Cruveiller S."/>
            <person name="Danchin A."/>
            <person name="Diard M."/>
            <person name="Dossat C."/>
            <person name="Karoui M.E."/>
            <person name="Frapy E."/>
            <person name="Garry L."/>
            <person name="Ghigo J.M."/>
            <person name="Gilles A.M."/>
            <person name="Johnson J."/>
            <person name="Le Bouguenec C."/>
            <person name="Lescat M."/>
            <person name="Mangenot S."/>
            <person name="Martinez-Jehanne V."/>
            <person name="Matic I."/>
            <person name="Nassif X."/>
            <person name="Oztas S."/>
            <person name="Petit M.A."/>
            <person name="Pichon C."/>
            <person name="Rouy Z."/>
            <person name="Ruf C.S."/>
            <person name="Schneider D."/>
            <person name="Tourret J."/>
            <person name="Vacherie B."/>
            <person name="Vallenet D."/>
            <person name="Medigue C."/>
            <person name="Rocha E.P.C."/>
            <person name="Denamur E."/>
        </authorList>
    </citation>
    <scope>NUCLEOTIDE SEQUENCE [LARGE SCALE GENOMIC DNA]</scope>
    <source>
        <strain>ATCC 35469 / DSM 13698 / BCRC 15582 / CCUG 18766 / IAM 14443 / JCM 21226 / LMG 7866 / NBRC 102419 / NCTC 12128 / CDC 0568-73</strain>
    </source>
</reference>
<feature type="chain" id="PRO_1000189087" description="Small heat shock protein IbpA">
    <location>
        <begin position="1"/>
        <end position="137"/>
    </location>
</feature>
<feature type="domain" description="sHSP" evidence="2">
    <location>
        <begin position="28"/>
        <end position="137"/>
    </location>
</feature>
<accession>B7LK29</accession>
<protein>
    <recommendedName>
        <fullName evidence="1">Small heat shock protein IbpA</fullName>
    </recommendedName>
    <alternativeName>
        <fullName evidence="1">16 kDa heat shock protein A</fullName>
    </alternativeName>
</protein>
<keyword id="KW-0143">Chaperone</keyword>
<keyword id="KW-0963">Cytoplasm</keyword>
<keyword id="KW-0346">Stress response</keyword>
<gene>
    <name evidence="1" type="primary">ibpA</name>
    <name type="ordered locus">EFER_3982</name>
</gene>
<dbReference type="EMBL" id="CU928158">
    <property type="protein sequence ID" value="CAQ91416.1"/>
    <property type="molecule type" value="Genomic_DNA"/>
</dbReference>
<dbReference type="RefSeq" id="WP_001243437.1">
    <property type="nucleotide sequence ID" value="NC_011740.1"/>
</dbReference>
<dbReference type="SMR" id="B7LK29"/>
<dbReference type="GeneID" id="93778428"/>
<dbReference type="KEGG" id="efe:EFER_3982"/>
<dbReference type="HOGENOM" id="CLU_046737_4_2_6"/>
<dbReference type="OrthoDB" id="6871152at2"/>
<dbReference type="Proteomes" id="UP000000745">
    <property type="component" value="Chromosome"/>
</dbReference>
<dbReference type="GO" id="GO:0005737">
    <property type="term" value="C:cytoplasm"/>
    <property type="evidence" value="ECO:0007669"/>
    <property type="project" value="UniProtKB-SubCell"/>
</dbReference>
<dbReference type="GO" id="GO:0050821">
    <property type="term" value="P:protein stabilization"/>
    <property type="evidence" value="ECO:0007669"/>
    <property type="project" value="UniProtKB-UniRule"/>
</dbReference>
<dbReference type="CDD" id="cd06470">
    <property type="entry name" value="ACD_IbpA-B_like"/>
    <property type="match status" value="1"/>
</dbReference>
<dbReference type="FunFam" id="2.60.40.790:FF:000002">
    <property type="entry name" value="Small heat shock protein IbpA"/>
    <property type="match status" value="1"/>
</dbReference>
<dbReference type="Gene3D" id="2.60.40.790">
    <property type="match status" value="1"/>
</dbReference>
<dbReference type="HAMAP" id="MF_02000">
    <property type="entry name" value="HSP20_IbpA"/>
    <property type="match status" value="1"/>
</dbReference>
<dbReference type="InterPro" id="IPR002068">
    <property type="entry name" value="A-crystallin/Hsp20_dom"/>
</dbReference>
<dbReference type="InterPro" id="IPR037913">
    <property type="entry name" value="ACD_IbpA/B"/>
</dbReference>
<dbReference type="InterPro" id="IPR008978">
    <property type="entry name" value="HSP20-like_chaperone"/>
</dbReference>
<dbReference type="InterPro" id="IPR023728">
    <property type="entry name" value="HSP20_IbpA"/>
</dbReference>
<dbReference type="NCBIfam" id="NF008013">
    <property type="entry name" value="PRK10743.1"/>
    <property type="match status" value="1"/>
</dbReference>
<dbReference type="PANTHER" id="PTHR47062">
    <property type="match status" value="1"/>
</dbReference>
<dbReference type="PANTHER" id="PTHR47062:SF1">
    <property type="entry name" value="SMALL HEAT SHOCK PROTEIN IBPA"/>
    <property type="match status" value="1"/>
</dbReference>
<dbReference type="Pfam" id="PF00011">
    <property type="entry name" value="HSP20"/>
    <property type="match status" value="1"/>
</dbReference>
<dbReference type="SUPFAM" id="SSF49764">
    <property type="entry name" value="HSP20-like chaperones"/>
    <property type="match status" value="1"/>
</dbReference>
<dbReference type="PROSITE" id="PS01031">
    <property type="entry name" value="SHSP"/>
    <property type="match status" value="1"/>
</dbReference>
<evidence type="ECO:0000255" key="1">
    <source>
        <dbReference type="HAMAP-Rule" id="MF_02000"/>
    </source>
</evidence>
<evidence type="ECO:0000255" key="2">
    <source>
        <dbReference type="PROSITE-ProRule" id="PRU00285"/>
    </source>
</evidence>
<sequence length="137" mass="15774">MRNFDLSPLYRSAIGFDRLFNHLENNQSQSNGGYPPYNVELVDENHYRIAIAVAGFAESELEITAQDNLLVVKGAHADEQKERTYLYQGIAERNFERKFQLAENIHVRGANLVNGLLYIDLERVIPEAKKPRRIEIN</sequence>
<comment type="function">
    <text evidence="1">Associates with aggregated proteins, together with IbpB, to stabilize and protect them from irreversible denaturation and extensive proteolysis during heat shock and oxidative stress. Aggregated proteins bound to the IbpAB complex are more efficiently refolded and reactivated by the ATP-dependent chaperone systems ClpB and DnaK/DnaJ/GrpE. Its activity is ATP-independent.</text>
</comment>
<comment type="subunit">
    <text evidence="1">Monomer. Forms homomultimers of about 100-150 subunits at optimal growth temperatures. Conformation changes to monomers at high temperatures or high ionic concentrations.</text>
</comment>
<comment type="subcellular location">
    <subcellularLocation>
        <location evidence="1">Cytoplasm</location>
    </subcellularLocation>
</comment>
<comment type="similarity">
    <text evidence="1 2">Belongs to the small heat shock protein (HSP20) family.</text>
</comment>
<proteinExistence type="inferred from homology"/>
<name>IBPA_ESCF3</name>
<organism>
    <name type="scientific">Escherichia fergusonii (strain ATCC 35469 / DSM 13698 / CCUG 18766 / IAM 14443 / JCM 21226 / LMG 7866 / NBRC 102419 / NCTC 12128 / CDC 0568-73)</name>
    <dbReference type="NCBI Taxonomy" id="585054"/>
    <lineage>
        <taxon>Bacteria</taxon>
        <taxon>Pseudomonadati</taxon>
        <taxon>Pseudomonadota</taxon>
        <taxon>Gammaproteobacteria</taxon>
        <taxon>Enterobacterales</taxon>
        <taxon>Enterobacteriaceae</taxon>
        <taxon>Escherichia</taxon>
    </lineage>
</organism>